<sequence>MSDTVLGLVLVAAGYLAGSIPFGVVLGRFVLGVDVRQVGSGNIGATNVARAGGKKLGIAVLLLDAAKAIVPILVARWLLAGTPRAELFTVLVALAAFVGHLYPVWLGFRGGKGVATGLGIFLVLSPWAALAGAVTYGVAYGATRISSVGSLSGTAVCVLGTFVAHGWTSPVSWAGLALAALIVVRHRENIRRLVRGEEKRMRV</sequence>
<dbReference type="EC" id="2.3.1.275" evidence="1"/>
<dbReference type="EMBL" id="CP000769">
    <property type="protein sequence ID" value="ABS28521.1"/>
    <property type="molecule type" value="Genomic_DNA"/>
</dbReference>
<dbReference type="RefSeq" id="WP_012099166.1">
    <property type="nucleotide sequence ID" value="NC_009675.1"/>
</dbReference>
<dbReference type="SMR" id="A7HIH5"/>
<dbReference type="STRING" id="404589.Anae109_4343"/>
<dbReference type="KEGG" id="afw:Anae109_4343"/>
<dbReference type="eggNOG" id="COG0344">
    <property type="taxonomic scope" value="Bacteria"/>
</dbReference>
<dbReference type="HOGENOM" id="CLU_081254_0_0_7"/>
<dbReference type="OrthoDB" id="9777124at2"/>
<dbReference type="UniPathway" id="UPA00085"/>
<dbReference type="Proteomes" id="UP000006382">
    <property type="component" value="Chromosome"/>
</dbReference>
<dbReference type="GO" id="GO:0005886">
    <property type="term" value="C:plasma membrane"/>
    <property type="evidence" value="ECO:0007669"/>
    <property type="project" value="UniProtKB-SubCell"/>
</dbReference>
<dbReference type="GO" id="GO:0043772">
    <property type="term" value="F:acyl-phosphate glycerol-3-phosphate acyltransferase activity"/>
    <property type="evidence" value="ECO:0007669"/>
    <property type="project" value="UniProtKB-UniRule"/>
</dbReference>
<dbReference type="GO" id="GO:0008654">
    <property type="term" value="P:phospholipid biosynthetic process"/>
    <property type="evidence" value="ECO:0007669"/>
    <property type="project" value="UniProtKB-UniRule"/>
</dbReference>
<dbReference type="HAMAP" id="MF_01043">
    <property type="entry name" value="PlsY"/>
    <property type="match status" value="1"/>
</dbReference>
<dbReference type="InterPro" id="IPR003811">
    <property type="entry name" value="G3P_acylTferase_PlsY"/>
</dbReference>
<dbReference type="NCBIfam" id="TIGR00023">
    <property type="entry name" value="glycerol-3-phosphate 1-O-acyltransferase PlsY"/>
    <property type="match status" value="1"/>
</dbReference>
<dbReference type="PANTHER" id="PTHR30309:SF0">
    <property type="entry name" value="GLYCEROL-3-PHOSPHATE ACYLTRANSFERASE-RELATED"/>
    <property type="match status" value="1"/>
</dbReference>
<dbReference type="PANTHER" id="PTHR30309">
    <property type="entry name" value="INNER MEMBRANE PROTEIN YGIH"/>
    <property type="match status" value="1"/>
</dbReference>
<dbReference type="Pfam" id="PF02660">
    <property type="entry name" value="G3P_acyltransf"/>
    <property type="match status" value="1"/>
</dbReference>
<dbReference type="SMART" id="SM01207">
    <property type="entry name" value="G3P_acyltransf"/>
    <property type="match status" value="1"/>
</dbReference>
<protein>
    <recommendedName>
        <fullName evidence="1">Glycerol-3-phosphate acyltransferase</fullName>
    </recommendedName>
    <alternativeName>
        <fullName evidence="1">Acyl-PO4 G3P acyltransferase</fullName>
    </alternativeName>
    <alternativeName>
        <fullName evidence="1">Acyl-phosphate--glycerol-3-phosphate acyltransferase</fullName>
    </alternativeName>
    <alternativeName>
        <fullName evidence="1">G3P acyltransferase</fullName>
        <shortName evidence="1">GPAT</shortName>
        <ecNumber evidence="1">2.3.1.275</ecNumber>
    </alternativeName>
    <alternativeName>
        <fullName evidence="1">Lysophosphatidic acid synthase</fullName>
        <shortName evidence="1">LPA synthase</shortName>
    </alternativeName>
</protein>
<proteinExistence type="inferred from homology"/>
<organism>
    <name type="scientific">Anaeromyxobacter sp. (strain Fw109-5)</name>
    <dbReference type="NCBI Taxonomy" id="404589"/>
    <lineage>
        <taxon>Bacteria</taxon>
        <taxon>Pseudomonadati</taxon>
        <taxon>Myxococcota</taxon>
        <taxon>Myxococcia</taxon>
        <taxon>Myxococcales</taxon>
        <taxon>Cystobacterineae</taxon>
        <taxon>Anaeromyxobacteraceae</taxon>
        <taxon>Anaeromyxobacter</taxon>
    </lineage>
</organism>
<reference key="1">
    <citation type="journal article" date="2015" name="Genome Announc.">
        <title>Complete genome sequence of Anaeromyxobacter sp. Fw109-5, an anaerobic, metal-reducing bacterium isolated from a contaminated subsurface environment.</title>
        <authorList>
            <person name="Hwang C."/>
            <person name="Copeland A."/>
            <person name="Lucas S."/>
            <person name="Lapidus A."/>
            <person name="Barry K."/>
            <person name="Glavina Del Rio T."/>
            <person name="Dalin E."/>
            <person name="Tice H."/>
            <person name="Pitluck S."/>
            <person name="Sims D."/>
            <person name="Brettin T."/>
            <person name="Bruce D.C."/>
            <person name="Detter J.C."/>
            <person name="Han C.S."/>
            <person name="Schmutz J."/>
            <person name="Larimer F.W."/>
            <person name="Land M.L."/>
            <person name="Hauser L.J."/>
            <person name="Kyrpides N."/>
            <person name="Lykidis A."/>
            <person name="Richardson P."/>
            <person name="Belieav A."/>
            <person name="Sanford R.A."/>
            <person name="Loeffler F.E."/>
            <person name="Fields M.W."/>
        </authorList>
    </citation>
    <scope>NUCLEOTIDE SEQUENCE [LARGE SCALE GENOMIC DNA]</scope>
    <source>
        <strain>Fw109-5</strain>
    </source>
</reference>
<accession>A7HIH5</accession>
<keyword id="KW-0997">Cell inner membrane</keyword>
<keyword id="KW-1003">Cell membrane</keyword>
<keyword id="KW-0444">Lipid biosynthesis</keyword>
<keyword id="KW-0443">Lipid metabolism</keyword>
<keyword id="KW-0472">Membrane</keyword>
<keyword id="KW-0594">Phospholipid biosynthesis</keyword>
<keyword id="KW-1208">Phospholipid metabolism</keyword>
<keyword id="KW-1185">Reference proteome</keyword>
<keyword id="KW-0808">Transferase</keyword>
<keyword id="KW-0812">Transmembrane</keyword>
<keyword id="KW-1133">Transmembrane helix</keyword>
<feature type="chain" id="PRO_1000064157" description="Glycerol-3-phosphate acyltransferase">
    <location>
        <begin position="1"/>
        <end position="203"/>
    </location>
</feature>
<feature type="transmembrane region" description="Helical" evidence="1">
    <location>
        <begin position="5"/>
        <end position="25"/>
    </location>
</feature>
<feature type="transmembrane region" description="Helical" evidence="1">
    <location>
        <begin position="55"/>
        <end position="75"/>
    </location>
</feature>
<feature type="transmembrane region" description="Helical" evidence="1">
    <location>
        <begin position="88"/>
        <end position="108"/>
    </location>
</feature>
<feature type="transmembrane region" description="Helical" evidence="1">
    <location>
        <begin position="114"/>
        <end position="134"/>
    </location>
</feature>
<feature type="transmembrane region" description="Helical" evidence="1">
    <location>
        <begin position="162"/>
        <end position="182"/>
    </location>
</feature>
<evidence type="ECO:0000255" key="1">
    <source>
        <dbReference type="HAMAP-Rule" id="MF_01043"/>
    </source>
</evidence>
<comment type="function">
    <text evidence="1">Catalyzes the transfer of an acyl group from acyl-phosphate (acyl-PO(4)) to glycerol-3-phosphate (G3P) to form lysophosphatidic acid (LPA). This enzyme utilizes acyl-phosphate as fatty acyl donor, but not acyl-CoA or acyl-ACP.</text>
</comment>
<comment type="catalytic activity">
    <reaction evidence="1">
        <text>an acyl phosphate + sn-glycerol 3-phosphate = a 1-acyl-sn-glycero-3-phosphate + phosphate</text>
        <dbReference type="Rhea" id="RHEA:34075"/>
        <dbReference type="ChEBI" id="CHEBI:43474"/>
        <dbReference type="ChEBI" id="CHEBI:57597"/>
        <dbReference type="ChEBI" id="CHEBI:57970"/>
        <dbReference type="ChEBI" id="CHEBI:59918"/>
        <dbReference type="EC" id="2.3.1.275"/>
    </reaction>
</comment>
<comment type="pathway">
    <text evidence="1">Lipid metabolism; phospholipid metabolism.</text>
</comment>
<comment type="subunit">
    <text evidence="1">Probably interacts with PlsX.</text>
</comment>
<comment type="subcellular location">
    <subcellularLocation>
        <location evidence="1">Cell inner membrane</location>
        <topology evidence="1">Multi-pass membrane protein</topology>
    </subcellularLocation>
</comment>
<comment type="similarity">
    <text evidence="1">Belongs to the PlsY family.</text>
</comment>
<name>PLSY_ANADF</name>
<gene>
    <name evidence="1" type="primary">plsY</name>
    <name type="ordered locus">Anae109_4343</name>
</gene>